<evidence type="ECO:0000255" key="1">
    <source>
        <dbReference type="PROSITE-ProRule" id="PRU00068"/>
    </source>
</evidence>
<evidence type="ECO:0000269" key="2">
    <source>
    </source>
</evidence>
<evidence type="ECO:0000269" key="3">
    <source>
    </source>
</evidence>
<evidence type="ECO:0000305" key="4"/>
<evidence type="ECO:0000305" key="5">
    <source>
    </source>
</evidence>
<dbReference type="SMR" id="P83254"/>
<dbReference type="GO" id="GO:0005576">
    <property type="term" value="C:extracellular region"/>
    <property type="evidence" value="ECO:0007669"/>
    <property type="project" value="UniProtKB-SubCell"/>
</dbReference>
<dbReference type="GO" id="GO:0090729">
    <property type="term" value="F:toxin activity"/>
    <property type="evidence" value="ECO:0007669"/>
    <property type="project" value="UniProtKB-KW"/>
</dbReference>
<dbReference type="GO" id="GO:0007155">
    <property type="term" value="P:cell adhesion"/>
    <property type="evidence" value="ECO:0000304"/>
    <property type="project" value="UniProtKB"/>
</dbReference>
<dbReference type="GO" id="GO:0030195">
    <property type="term" value="P:negative regulation of blood coagulation"/>
    <property type="evidence" value="ECO:0000304"/>
    <property type="project" value="UniProtKB"/>
</dbReference>
<dbReference type="Gene3D" id="4.10.70.10">
    <property type="entry name" value="Disintegrin domain"/>
    <property type="match status" value="1"/>
</dbReference>
<dbReference type="InterPro" id="IPR001762">
    <property type="entry name" value="Disintegrin_dom"/>
</dbReference>
<dbReference type="InterPro" id="IPR036436">
    <property type="entry name" value="Disintegrin_dom_sf"/>
</dbReference>
<dbReference type="PANTHER" id="PTHR11905">
    <property type="entry name" value="ADAM A DISINTEGRIN AND METALLOPROTEASE DOMAIN"/>
    <property type="match status" value="1"/>
</dbReference>
<dbReference type="PANTHER" id="PTHR11905:SF159">
    <property type="entry name" value="ADAM METALLOPROTEASE"/>
    <property type="match status" value="1"/>
</dbReference>
<dbReference type="Pfam" id="PF00200">
    <property type="entry name" value="Disintegrin"/>
    <property type="match status" value="1"/>
</dbReference>
<dbReference type="PRINTS" id="PR00289">
    <property type="entry name" value="DISINTEGRIN"/>
</dbReference>
<dbReference type="SMART" id="SM00050">
    <property type="entry name" value="DISIN"/>
    <property type="match status" value="1"/>
</dbReference>
<dbReference type="SUPFAM" id="SSF57552">
    <property type="entry name" value="Blood coagulation inhibitor (disintegrin)"/>
    <property type="match status" value="1"/>
</dbReference>
<dbReference type="PROSITE" id="PS50214">
    <property type="entry name" value="DISINTEGRIN_2"/>
    <property type="match status" value="1"/>
</dbReference>
<comment type="function">
    <text evidence="2 3">Strongly inhibits ADP-induced platelet aggregation on human platelet-rich plasma. Also avidly binds to the laminin-binding beta-1 integrins (alpha-3/beta-1, alpha-6/beta-1, and alpha-7/beta-1) in an RGD-independent manner.</text>
</comment>
<comment type="subunit">
    <text evidence="2 3">Heterodimer with subunit alpha; disulfide-linked.</text>
</comment>
<comment type="subcellular location">
    <subcellularLocation>
        <location>Secreted</location>
    </subcellularLocation>
</comment>
<comment type="tissue specificity">
    <text>Expressed by the venom gland.</text>
</comment>
<comment type="mass spectrometry"/>
<comment type="mass spectrometry">
    <text>Heterodimer.</text>
</comment>
<comment type="miscellaneous">
    <text evidence="5">Negative results: does not interact with the collagen-binding alpha-1/beta-1 (ITGA1/ITGB1) and alpha-2/beta-1 (ITGA2/ITGB1) integrins.</text>
</comment>
<comment type="similarity">
    <text evidence="4">Belongs to the disintegrin family. Dimeric disintegrin subfamily.</text>
</comment>
<reference evidence="4" key="1">
    <citation type="journal article" date="2001" name="Biochim. Biophys. Acta">
        <title>Amino acid structure and characterization of a heterodimeric disintegrin from Vipera lebetina venom.</title>
        <authorList>
            <person name="Gasmi A."/>
            <person name="Srairi N."/>
            <person name="Guermazi S."/>
            <person name="Dekhil H."/>
            <person name="Karoui H."/>
            <person name="El Ayeb M."/>
        </authorList>
    </citation>
    <scope>PROTEIN SEQUENCE</scope>
    <scope>FUNCTION</scope>
    <scope>SUBUNIT</scope>
    <scope>MASS SPECTROMETRY</scope>
    <source>
        <tissue>Venom</tissue>
    </source>
</reference>
<reference key="2">
    <citation type="journal article" date="2006" name="Biochim. Biophys. Acta">
        <authorList>
            <person name="Gasmi A."/>
            <person name="Srairi N."/>
            <person name="Guermazi S."/>
            <person name="Dekhil H."/>
            <person name="Karoui H."/>
            <person name="El Ayeb M."/>
        </authorList>
    </citation>
    <scope>ERRATUM OF PUBMED:11343790</scope>
</reference>
<reference key="3">
    <citation type="journal article" date="2006" name="Biochem. J.">
        <title>Molecular cloning of disintegrins from Cerastes vipera and Macrovipera lebetina transmediterranea venom gland cDNA libraries: insight into the evolution of the snake venom integrin-inhibition system.</title>
        <authorList>
            <person name="Sanz L."/>
            <person name="Bazaa A."/>
            <person name="Marrakchi N."/>
            <person name="Perez A."/>
            <person name="Chenik M."/>
            <person name="Bel Lasfer Z."/>
            <person name="El Ayeb M."/>
            <person name="Calvete J.J."/>
        </authorList>
    </citation>
    <scope>PROTEIN SEQUENCE OF 1-15; 17-30 AND 43-59</scope>
    <scope>IDENTIFICATION BY MASS SPECTROMETRY</scope>
    <source>
        <tissue>Venom</tissue>
    </source>
</reference>
<reference key="4">
    <citation type="journal article" date="2003" name="J. Biol. Chem.">
        <title>Vipera lebetina venom contains two disintegrins inhibiting laminin-binding beta1 integrins.</title>
        <authorList>
            <person name="Eble J.A."/>
            <person name="Bruckner P."/>
            <person name="Mayer U."/>
        </authorList>
    </citation>
    <scope>PROTEIN SEQUENCE OF 1-8</scope>
    <scope>FUNCTION</scope>
    <scope>SUBUNIT</scope>
    <scope>MASS SPECTROMETRY</scope>
    <source>
        <tissue>Venom</tissue>
    </source>
</reference>
<protein>
    <recommendedName>
        <fullName>Disintegrin lebein-1-beta</fullName>
    </recommendedName>
    <alternativeName>
        <fullName>MS-II</fullName>
    </alternativeName>
    <alternativeName>
        <fullName>Platelet aggregation activation inhibitor</fullName>
    </alternativeName>
</protein>
<feature type="chain" id="PRO_0000101813" description="Disintegrin lebein-1-beta">
    <location>
        <begin position="1"/>
        <end position="64"/>
    </location>
</feature>
<feature type="domain" description="Disintegrin" evidence="1">
    <location>
        <begin position="1"/>
        <end position="64"/>
    </location>
</feature>
<feature type="short sequence motif" description="Cell attachment site">
    <location>
        <begin position="42"/>
        <end position="44"/>
    </location>
</feature>
<feature type="disulfide bond" evidence="1">
    <location>
        <begin position="6"/>
        <end position="29"/>
    </location>
</feature>
<feature type="disulfide bond" description="Interchain (with C-54 in alpha subunit)" evidence="1">
    <location>
        <position position="7"/>
    </location>
</feature>
<feature type="disulfide bond" description="Interchain (with C-59 in alpha subunit)" evidence="1">
    <location>
        <position position="12"/>
    </location>
</feature>
<feature type="disulfide bond" evidence="1">
    <location>
        <begin position="20"/>
        <end position="26"/>
    </location>
</feature>
<feature type="disulfide bond" evidence="1">
    <location>
        <begin position="25"/>
        <end position="50"/>
    </location>
</feature>
<feature type="disulfide bond" evidence="1">
    <location>
        <begin position="38"/>
        <end position="57"/>
    </location>
</feature>
<organism evidence="4">
    <name type="scientific">Macrovipera lebetinus</name>
    <name type="common">Levantine viper</name>
    <name type="synonym">Vipera lebetina</name>
    <dbReference type="NCBI Taxonomy" id="3148341"/>
    <lineage>
        <taxon>Eukaryota</taxon>
        <taxon>Metazoa</taxon>
        <taxon>Chordata</taxon>
        <taxon>Craniata</taxon>
        <taxon>Vertebrata</taxon>
        <taxon>Euteleostomi</taxon>
        <taxon>Lepidosauria</taxon>
        <taxon>Squamata</taxon>
        <taxon>Bifurcata</taxon>
        <taxon>Unidentata</taxon>
        <taxon>Episquamata</taxon>
        <taxon>Toxicofera</taxon>
        <taxon>Serpentes</taxon>
        <taxon>Colubroidea</taxon>
        <taxon>Viperidae</taxon>
        <taxon>Viperinae</taxon>
        <taxon>Macrovipera</taxon>
    </lineage>
</organism>
<accession>P83254</accession>
<proteinExistence type="evidence at protein level"/>
<name>DID1B_MACLB</name>
<keyword id="KW-1217">Cell adhesion impairing toxin</keyword>
<keyword id="KW-0903">Direct protein sequencing</keyword>
<keyword id="KW-1015">Disulfide bond</keyword>
<keyword id="KW-1199">Hemostasis impairing toxin</keyword>
<keyword id="KW-1201">Platelet aggregation inhibiting toxin</keyword>
<keyword id="KW-0964">Secreted</keyword>
<keyword id="KW-0800">Toxin</keyword>
<sequence>NSGNPCCDPVTCKPRRGWHCVSNPCCDNCKFMRAGTICNRARGDDMNDYCTGISSDCPRNPYKD</sequence>